<keyword id="KW-0479">Metal-binding</keyword>
<keyword id="KW-0520">NAD</keyword>
<keyword id="KW-0560">Oxidoreductase</keyword>
<keyword id="KW-1185">Reference proteome</keyword>
<accession>A0KHR8</accession>
<evidence type="ECO:0000255" key="1">
    <source>
        <dbReference type="HAMAP-Rule" id="MF_01619"/>
    </source>
</evidence>
<evidence type="ECO:0000305" key="2"/>
<gene>
    <name evidence="1" type="primary">maeA</name>
    <name type="ordered locus">AHA_1278</name>
</gene>
<comment type="catalytic activity">
    <reaction evidence="1">
        <text>(S)-malate + NAD(+) = pyruvate + CO2 + NADH</text>
        <dbReference type="Rhea" id="RHEA:12653"/>
        <dbReference type="ChEBI" id="CHEBI:15361"/>
        <dbReference type="ChEBI" id="CHEBI:15589"/>
        <dbReference type="ChEBI" id="CHEBI:16526"/>
        <dbReference type="ChEBI" id="CHEBI:57540"/>
        <dbReference type="ChEBI" id="CHEBI:57945"/>
        <dbReference type="EC" id="1.1.1.38"/>
    </reaction>
</comment>
<comment type="catalytic activity">
    <reaction evidence="1">
        <text>oxaloacetate + H(+) = pyruvate + CO2</text>
        <dbReference type="Rhea" id="RHEA:15641"/>
        <dbReference type="ChEBI" id="CHEBI:15361"/>
        <dbReference type="ChEBI" id="CHEBI:15378"/>
        <dbReference type="ChEBI" id="CHEBI:16452"/>
        <dbReference type="ChEBI" id="CHEBI:16526"/>
        <dbReference type="EC" id="1.1.1.38"/>
    </reaction>
</comment>
<comment type="cofactor">
    <cofactor evidence="1">
        <name>Mg(2+)</name>
        <dbReference type="ChEBI" id="CHEBI:18420"/>
    </cofactor>
    <cofactor evidence="1">
        <name>Mn(2+)</name>
        <dbReference type="ChEBI" id="CHEBI:29035"/>
    </cofactor>
    <text evidence="1">Divalent metal cations. Prefers magnesium or manganese.</text>
</comment>
<comment type="subunit">
    <text evidence="1">Homotetramer.</text>
</comment>
<comment type="similarity">
    <text evidence="1">Belongs to the malic enzymes family.</text>
</comment>
<comment type="sequence caution" evidence="2">
    <conflict type="erroneous initiation">
        <sequence resource="EMBL-CDS" id="ABK38619"/>
    </conflict>
</comment>
<reference key="1">
    <citation type="journal article" date="2006" name="J. Bacteriol.">
        <title>Genome sequence of Aeromonas hydrophila ATCC 7966T: jack of all trades.</title>
        <authorList>
            <person name="Seshadri R."/>
            <person name="Joseph S.W."/>
            <person name="Chopra A.K."/>
            <person name="Sha J."/>
            <person name="Shaw J."/>
            <person name="Graf J."/>
            <person name="Haft D.H."/>
            <person name="Wu M."/>
            <person name="Ren Q."/>
            <person name="Rosovitz M.J."/>
            <person name="Madupu R."/>
            <person name="Tallon L."/>
            <person name="Kim M."/>
            <person name="Jin S."/>
            <person name="Vuong H."/>
            <person name="Stine O.C."/>
            <person name="Ali A."/>
            <person name="Horneman A.J."/>
            <person name="Heidelberg J.F."/>
        </authorList>
    </citation>
    <scope>NUCLEOTIDE SEQUENCE [LARGE SCALE GENOMIC DNA]</scope>
    <source>
        <strain>ATCC 7966 / DSM 30187 / BCRC 13018 / CCUG 14551 / JCM 1027 / KCTC 2358 / NCIMB 9240 / NCTC 8049</strain>
    </source>
</reference>
<dbReference type="EC" id="1.1.1.38" evidence="1"/>
<dbReference type="EMBL" id="CP000462">
    <property type="protein sequence ID" value="ABK38619.1"/>
    <property type="status" value="ALT_INIT"/>
    <property type="molecule type" value="Genomic_DNA"/>
</dbReference>
<dbReference type="RefSeq" id="WP_011705191.1">
    <property type="nucleotide sequence ID" value="NC_008570.1"/>
</dbReference>
<dbReference type="RefSeq" id="YP_855819.2">
    <property type="nucleotide sequence ID" value="NC_008570.1"/>
</dbReference>
<dbReference type="SMR" id="A0KHR8"/>
<dbReference type="STRING" id="380703.AHA_1278"/>
<dbReference type="EnsemblBacteria" id="ABK38619">
    <property type="protein sequence ID" value="ABK38619"/>
    <property type="gene ID" value="AHA_1278"/>
</dbReference>
<dbReference type="GeneID" id="4490711"/>
<dbReference type="KEGG" id="aha:AHA_1278"/>
<dbReference type="PATRIC" id="fig|380703.7.peg.1289"/>
<dbReference type="eggNOG" id="COG0281">
    <property type="taxonomic scope" value="Bacteria"/>
</dbReference>
<dbReference type="HOGENOM" id="CLU_011405_5_2_6"/>
<dbReference type="OrthoDB" id="3314528at2"/>
<dbReference type="Proteomes" id="UP000000756">
    <property type="component" value="Chromosome"/>
</dbReference>
<dbReference type="GO" id="GO:0005829">
    <property type="term" value="C:cytosol"/>
    <property type="evidence" value="ECO:0007669"/>
    <property type="project" value="TreeGrafter"/>
</dbReference>
<dbReference type="GO" id="GO:0004471">
    <property type="term" value="F:malate dehydrogenase (decarboxylating) (NAD+) activity"/>
    <property type="evidence" value="ECO:0007669"/>
    <property type="project" value="UniProtKB-UniRule"/>
</dbReference>
<dbReference type="GO" id="GO:0046872">
    <property type="term" value="F:metal ion binding"/>
    <property type="evidence" value="ECO:0007669"/>
    <property type="project" value="UniProtKB-KW"/>
</dbReference>
<dbReference type="GO" id="GO:0051287">
    <property type="term" value="F:NAD binding"/>
    <property type="evidence" value="ECO:0007669"/>
    <property type="project" value="InterPro"/>
</dbReference>
<dbReference type="GO" id="GO:0008948">
    <property type="term" value="F:oxaloacetate decarboxylase activity"/>
    <property type="evidence" value="ECO:0007669"/>
    <property type="project" value="UniProtKB-UniRule"/>
</dbReference>
<dbReference type="GO" id="GO:0006108">
    <property type="term" value="P:malate metabolic process"/>
    <property type="evidence" value="ECO:0007669"/>
    <property type="project" value="TreeGrafter"/>
</dbReference>
<dbReference type="CDD" id="cd05312">
    <property type="entry name" value="NAD_bind_1_malic_enz"/>
    <property type="match status" value="1"/>
</dbReference>
<dbReference type="FunFam" id="3.40.50.10380:FF:000001">
    <property type="entry name" value="NAD-dependent malic enzyme"/>
    <property type="match status" value="1"/>
</dbReference>
<dbReference type="FunFam" id="3.40.50.720:FF:000055">
    <property type="entry name" value="NAD-dependent malic enzyme"/>
    <property type="match status" value="1"/>
</dbReference>
<dbReference type="Gene3D" id="3.40.50.10380">
    <property type="entry name" value="Malic enzyme, N-terminal domain"/>
    <property type="match status" value="1"/>
</dbReference>
<dbReference type="Gene3D" id="3.40.50.720">
    <property type="entry name" value="NAD(P)-binding Rossmann-like Domain"/>
    <property type="match status" value="1"/>
</dbReference>
<dbReference type="HAMAP" id="MF_01619">
    <property type="entry name" value="NAD_malic_enz"/>
    <property type="match status" value="1"/>
</dbReference>
<dbReference type="InterPro" id="IPR046346">
    <property type="entry name" value="Aminoacid_DH-like_N_sf"/>
</dbReference>
<dbReference type="InterPro" id="IPR015884">
    <property type="entry name" value="Malic_enzyme_CS"/>
</dbReference>
<dbReference type="InterPro" id="IPR012301">
    <property type="entry name" value="Malic_N_dom"/>
</dbReference>
<dbReference type="InterPro" id="IPR037062">
    <property type="entry name" value="Malic_N_dom_sf"/>
</dbReference>
<dbReference type="InterPro" id="IPR012302">
    <property type="entry name" value="Malic_NAD-bd"/>
</dbReference>
<dbReference type="InterPro" id="IPR001891">
    <property type="entry name" value="Malic_OxRdtase"/>
</dbReference>
<dbReference type="InterPro" id="IPR036291">
    <property type="entry name" value="NAD(P)-bd_dom_sf"/>
</dbReference>
<dbReference type="InterPro" id="IPR023667">
    <property type="entry name" value="NAD_malic_enz_proteobac"/>
</dbReference>
<dbReference type="NCBIfam" id="NF010052">
    <property type="entry name" value="PRK13529.1"/>
    <property type="match status" value="1"/>
</dbReference>
<dbReference type="PANTHER" id="PTHR23406">
    <property type="entry name" value="MALIC ENZYME-RELATED"/>
    <property type="match status" value="1"/>
</dbReference>
<dbReference type="PANTHER" id="PTHR23406:SF34">
    <property type="entry name" value="NAD-DEPENDENT MALIC ENZYME, MITOCHONDRIAL"/>
    <property type="match status" value="1"/>
</dbReference>
<dbReference type="Pfam" id="PF00390">
    <property type="entry name" value="malic"/>
    <property type="match status" value="1"/>
</dbReference>
<dbReference type="Pfam" id="PF03949">
    <property type="entry name" value="Malic_M"/>
    <property type="match status" value="1"/>
</dbReference>
<dbReference type="PIRSF" id="PIRSF000106">
    <property type="entry name" value="ME"/>
    <property type="match status" value="1"/>
</dbReference>
<dbReference type="PRINTS" id="PR00072">
    <property type="entry name" value="MALOXRDTASE"/>
</dbReference>
<dbReference type="SMART" id="SM01274">
    <property type="entry name" value="malic"/>
    <property type="match status" value="1"/>
</dbReference>
<dbReference type="SMART" id="SM00919">
    <property type="entry name" value="Malic_M"/>
    <property type="match status" value="1"/>
</dbReference>
<dbReference type="SUPFAM" id="SSF53223">
    <property type="entry name" value="Aminoacid dehydrogenase-like, N-terminal domain"/>
    <property type="match status" value="1"/>
</dbReference>
<dbReference type="SUPFAM" id="SSF51735">
    <property type="entry name" value="NAD(P)-binding Rossmann-fold domains"/>
    <property type="match status" value="1"/>
</dbReference>
<dbReference type="PROSITE" id="PS00331">
    <property type="entry name" value="MALIC_ENZYMES"/>
    <property type="match status" value="1"/>
</dbReference>
<protein>
    <recommendedName>
        <fullName evidence="1">NAD-dependent malic enzyme</fullName>
        <shortName evidence="1">NAD-ME</shortName>
        <ecNumber evidence="1">1.1.1.38</ecNumber>
    </recommendedName>
</protein>
<proteinExistence type="inferred from homology"/>
<organism>
    <name type="scientific">Aeromonas hydrophila subsp. hydrophila (strain ATCC 7966 / DSM 30187 / BCRC 13018 / CCUG 14551 / JCM 1027 / KCTC 2358 / NCIMB 9240 / NCTC 8049)</name>
    <dbReference type="NCBI Taxonomy" id="380703"/>
    <lineage>
        <taxon>Bacteria</taxon>
        <taxon>Pseudomonadati</taxon>
        <taxon>Pseudomonadota</taxon>
        <taxon>Gammaproteobacteria</taxon>
        <taxon>Aeromonadales</taxon>
        <taxon>Aeromonadaceae</taxon>
        <taxon>Aeromonas</taxon>
    </lineage>
</organism>
<name>MAO1_AERHH</name>
<feature type="chain" id="PRO_0000323535" description="NAD-dependent malic enzyme">
    <location>
        <begin position="1"/>
        <end position="564"/>
    </location>
</feature>
<feature type="active site" description="Proton donor" evidence="1">
    <location>
        <position position="104"/>
    </location>
</feature>
<feature type="active site" description="Proton acceptor" evidence="1">
    <location>
        <position position="175"/>
    </location>
</feature>
<feature type="binding site" evidence="1">
    <location>
        <position position="157"/>
    </location>
    <ligand>
        <name>NAD(+)</name>
        <dbReference type="ChEBI" id="CHEBI:57540"/>
    </ligand>
</feature>
<feature type="binding site" evidence="1">
    <location>
        <position position="246"/>
    </location>
    <ligand>
        <name>a divalent metal cation</name>
        <dbReference type="ChEBI" id="CHEBI:60240"/>
    </ligand>
</feature>
<feature type="binding site" evidence="1">
    <location>
        <position position="247"/>
    </location>
    <ligand>
        <name>a divalent metal cation</name>
        <dbReference type="ChEBI" id="CHEBI:60240"/>
    </ligand>
</feature>
<feature type="binding site" evidence="1">
    <location>
        <position position="270"/>
    </location>
    <ligand>
        <name>a divalent metal cation</name>
        <dbReference type="ChEBI" id="CHEBI:60240"/>
    </ligand>
</feature>
<feature type="binding site" evidence="1">
    <location>
        <position position="270"/>
    </location>
    <ligand>
        <name>NAD(+)</name>
        <dbReference type="ChEBI" id="CHEBI:57540"/>
    </ligand>
</feature>
<feature type="binding site" evidence="1">
    <location>
        <position position="417"/>
    </location>
    <ligand>
        <name>NAD(+)</name>
        <dbReference type="ChEBI" id="CHEBI:57540"/>
    </ligand>
</feature>
<feature type="site" description="Important for activity" evidence="1">
    <location>
        <position position="270"/>
    </location>
</feature>
<sequence length="564" mass="62671">MFEDNNQKRPLYIPYAGPALLETPLLNKGSAFTSEERSNFNLEGLLPQNIETIEEQAERAYRQFMAFGNDMDKHIYLRNIQDTNETLFYRLLTNHLTEMLPVIYTPTVGKACEEFSNIYRRARGLFISYPDKDRIDDMLQNATKQNVKVIVVTDGERILGLGDQGIGGMGIPIGKLSLYTACGGISPAYCLPVVLDVGTNNQQLLNDPFYMGWRNPRISGEEYAEFVDAFIQAVKRRWPDILLQFEDFAQNNAMPLLNRYKNELCCFNDDIQGTAAVTLGSLIAACKASGAKLSEKRVAFLGAGSAGCGIAEQIVAQMKAEGLTDAQARSRVFMVDRFGLITDKIPNQLDFQRRLSQPVERIADWPVGDNISLLEVMEHGRPDILIGVSGQPGLFTEEVVKTMHKHCARPIIFPLSNPTSRVEATPADLIRWTDGQALVATGSPFAPVEYKGKRYVIAQCNNSFIFPGIGLGVIAAGATRVTDAMLMSASRALAECSPLVKGEEGSLLPDLADIHQVSRYIAKMVAKTAMLQGKAVQTPDEVIDQSIEANFWRPEYRRYRRTSF</sequence>